<protein>
    <recommendedName>
        <fullName evidence="1">Translation initiation factor IF-1</fullName>
    </recommendedName>
</protein>
<comment type="function">
    <text evidence="1">One of the essential components for the initiation of protein synthesis. Stabilizes the binding of IF-2 and IF-3 on the 30S subunit to which N-formylmethionyl-tRNA(fMet) subsequently binds. Helps modulate mRNA selection, yielding the 30S pre-initiation complex (PIC). Upon addition of the 50S ribosomal subunit IF-1, IF-2 and IF-3 are released leaving the mature 70S translation initiation complex.</text>
</comment>
<comment type="subunit">
    <text evidence="1">Component of the 30S ribosomal translation pre-initiation complex which assembles on the 30S ribosome in the order IF-2 and IF-3, IF-1 and N-formylmethionyl-tRNA(fMet); mRNA recruitment can occur at any time during PIC assembly.</text>
</comment>
<comment type="subcellular location">
    <subcellularLocation>
        <location evidence="1">Cytoplasm</location>
    </subcellularLocation>
</comment>
<comment type="similarity">
    <text evidence="1">Belongs to the IF-1 family.</text>
</comment>
<sequence length="72" mass="8245">MSKEDSIEVTGTVLEKFPSGLFSVQLEHERVVLAHLAGRLRRNRIRVLAGDKVTLELSPYDLTKGRITFRHR</sequence>
<evidence type="ECO:0000255" key="1">
    <source>
        <dbReference type="HAMAP-Rule" id="MF_00075"/>
    </source>
</evidence>
<accession>Q01QC0</accession>
<dbReference type="EMBL" id="CP000473">
    <property type="protein sequence ID" value="ABJ88150.1"/>
    <property type="molecule type" value="Genomic_DNA"/>
</dbReference>
<dbReference type="SMR" id="Q01QC0"/>
<dbReference type="FunCoup" id="Q01QC0">
    <property type="interactions" value="483"/>
</dbReference>
<dbReference type="STRING" id="234267.Acid_7239"/>
<dbReference type="KEGG" id="sus:Acid_7239"/>
<dbReference type="eggNOG" id="COG0361">
    <property type="taxonomic scope" value="Bacteria"/>
</dbReference>
<dbReference type="HOGENOM" id="CLU_151267_1_0_0"/>
<dbReference type="InParanoid" id="Q01QC0"/>
<dbReference type="OrthoDB" id="9803250at2"/>
<dbReference type="GO" id="GO:0005829">
    <property type="term" value="C:cytosol"/>
    <property type="evidence" value="ECO:0007669"/>
    <property type="project" value="TreeGrafter"/>
</dbReference>
<dbReference type="GO" id="GO:0043022">
    <property type="term" value="F:ribosome binding"/>
    <property type="evidence" value="ECO:0007669"/>
    <property type="project" value="UniProtKB-UniRule"/>
</dbReference>
<dbReference type="GO" id="GO:0019843">
    <property type="term" value="F:rRNA binding"/>
    <property type="evidence" value="ECO:0007669"/>
    <property type="project" value="UniProtKB-UniRule"/>
</dbReference>
<dbReference type="GO" id="GO:0003743">
    <property type="term" value="F:translation initiation factor activity"/>
    <property type="evidence" value="ECO:0007669"/>
    <property type="project" value="UniProtKB-UniRule"/>
</dbReference>
<dbReference type="CDD" id="cd04451">
    <property type="entry name" value="S1_IF1"/>
    <property type="match status" value="1"/>
</dbReference>
<dbReference type="FunFam" id="2.40.50.140:FF:000002">
    <property type="entry name" value="Translation initiation factor IF-1"/>
    <property type="match status" value="1"/>
</dbReference>
<dbReference type="Gene3D" id="2.40.50.140">
    <property type="entry name" value="Nucleic acid-binding proteins"/>
    <property type="match status" value="1"/>
</dbReference>
<dbReference type="HAMAP" id="MF_00075">
    <property type="entry name" value="IF_1"/>
    <property type="match status" value="1"/>
</dbReference>
<dbReference type="InterPro" id="IPR012340">
    <property type="entry name" value="NA-bd_OB-fold"/>
</dbReference>
<dbReference type="InterPro" id="IPR006196">
    <property type="entry name" value="RNA-binding_domain_S1_IF1"/>
</dbReference>
<dbReference type="InterPro" id="IPR004368">
    <property type="entry name" value="TIF_IF1"/>
</dbReference>
<dbReference type="NCBIfam" id="TIGR00008">
    <property type="entry name" value="infA"/>
    <property type="match status" value="1"/>
</dbReference>
<dbReference type="PANTHER" id="PTHR33370">
    <property type="entry name" value="TRANSLATION INITIATION FACTOR IF-1, CHLOROPLASTIC"/>
    <property type="match status" value="1"/>
</dbReference>
<dbReference type="PANTHER" id="PTHR33370:SF1">
    <property type="entry name" value="TRANSLATION INITIATION FACTOR IF-1, CHLOROPLASTIC"/>
    <property type="match status" value="1"/>
</dbReference>
<dbReference type="Pfam" id="PF01176">
    <property type="entry name" value="eIF-1a"/>
    <property type="match status" value="1"/>
</dbReference>
<dbReference type="SUPFAM" id="SSF50249">
    <property type="entry name" value="Nucleic acid-binding proteins"/>
    <property type="match status" value="1"/>
</dbReference>
<dbReference type="PROSITE" id="PS50832">
    <property type="entry name" value="S1_IF1_TYPE"/>
    <property type="match status" value="1"/>
</dbReference>
<organism>
    <name type="scientific">Solibacter usitatus (strain Ellin6076)</name>
    <dbReference type="NCBI Taxonomy" id="234267"/>
    <lineage>
        <taxon>Bacteria</taxon>
        <taxon>Pseudomonadati</taxon>
        <taxon>Acidobacteriota</taxon>
        <taxon>Terriglobia</taxon>
        <taxon>Bryobacterales</taxon>
        <taxon>Solibacteraceae</taxon>
        <taxon>Candidatus Solibacter</taxon>
    </lineage>
</organism>
<reference key="1">
    <citation type="journal article" date="2009" name="Appl. Environ. Microbiol.">
        <title>Three genomes from the phylum Acidobacteria provide insight into the lifestyles of these microorganisms in soils.</title>
        <authorList>
            <person name="Ward N.L."/>
            <person name="Challacombe J.F."/>
            <person name="Janssen P.H."/>
            <person name="Henrissat B."/>
            <person name="Coutinho P.M."/>
            <person name="Wu M."/>
            <person name="Xie G."/>
            <person name="Haft D.H."/>
            <person name="Sait M."/>
            <person name="Badger J."/>
            <person name="Barabote R.D."/>
            <person name="Bradley B."/>
            <person name="Brettin T.S."/>
            <person name="Brinkac L.M."/>
            <person name="Bruce D."/>
            <person name="Creasy T."/>
            <person name="Daugherty S.C."/>
            <person name="Davidsen T.M."/>
            <person name="DeBoy R.T."/>
            <person name="Detter J.C."/>
            <person name="Dodson R.J."/>
            <person name="Durkin A.S."/>
            <person name="Ganapathy A."/>
            <person name="Gwinn-Giglio M."/>
            <person name="Han C.S."/>
            <person name="Khouri H."/>
            <person name="Kiss H."/>
            <person name="Kothari S.P."/>
            <person name="Madupu R."/>
            <person name="Nelson K.E."/>
            <person name="Nelson W.C."/>
            <person name="Paulsen I."/>
            <person name="Penn K."/>
            <person name="Ren Q."/>
            <person name="Rosovitz M.J."/>
            <person name="Selengut J.D."/>
            <person name="Shrivastava S."/>
            <person name="Sullivan S.A."/>
            <person name="Tapia R."/>
            <person name="Thompson L.S."/>
            <person name="Watkins K.L."/>
            <person name="Yang Q."/>
            <person name="Yu C."/>
            <person name="Zafar N."/>
            <person name="Zhou L."/>
            <person name="Kuske C.R."/>
        </authorList>
    </citation>
    <scope>NUCLEOTIDE SEQUENCE [LARGE SCALE GENOMIC DNA]</scope>
    <source>
        <strain>Ellin6076</strain>
    </source>
</reference>
<feature type="chain" id="PRO_0000338927" description="Translation initiation factor IF-1">
    <location>
        <begin position="1"/>
        <end position="72"/>
    </location>
</feature>
<feature type="domain" description="S1-like" evidence="1">
    <location>
        <begin position="1"/>
        <end position="72"/>
    </location>
</feature>
<proteinExistence type="inferred from homology"/>
<name>IF1_SOLUE</name>
<gene>
    <name evidence="1" type="primary">infA</name>
    <name type="ordered locus">Acid_7239</name>
</gene>
<keyword id="KW-0963">Cytoplasm</keyword>
<keyword id="KW-0396">Initiation factor</keyword>
<keyword id="KW-0648">Protein biosynthesis</keyword>
<keyword id="KW-0694">RNA-binding</keyword>
<keyword id="KW-0699">rRNA-binding</keyword>